<sequence>MARTKQTARKSTGAKAPRKQLASKAARKSAPATGGIKKPHR</sequence>
<keyword id="KW-0158">Chromosome</keyword>
<keyword id="KW-0238">DNA-binding</keyword>
<keyword id="KW-0544">Nucleosome core</keyword>
<keyword id="KW-0539">Nucleus</keyword>
<protein>
    <recommendedName>
        <fullName>Histone H3.2</fullName>
    </recommendedName>
</protein>
<name>H32_TETPI</name>
<feature type="initiator methionine" description="Removed" evidence="1">
    <location>
        <position position="1"/>
    </location>
</feature>
<feature type="chain" id="PRO_0000221345" description="Histone H3.2">
    <location>
        <begin position="2"/>
        <end position="41" status="greater than"/>
    </location>
</feature>
<feature type="region of interest" description="Disordered" evidence="2">
    <location>
        <begin position="1"/>
        <end position="41"/>
    </location>
</feature>
<feature type="non-terminal residue">
    <location>
        <position position="41"/>
    </location>
</feature>
<comment type="function">
    <text>Core component of nucleosome. Nucleosomes wrap and compact DNA into chromatin, limiting DNA accessibility to the cellular machineries which require DNA as a template. Histones thereby play a central role in transcription regulation, DNA repair, DNA replication and chromosomal stability. DNA accessibility is regulated via a complex set of post-translational modifications of histones, also called histone code, and nucleosome remodeling.</text>
</comment>
<comment type="subunit">
    <text>The nucleosome is a histone octamer containing two molecules each of H2A, H2B, H3 and H4 assembled in one H3-H4 heterotetramer and two H2A-H2B heterodimers. The octamer wraps approximately 147 bp of DNA.</text>
</comment>
<comment type="subcellular location">
    <subcellularLocation>
        <location evidence="1">Nucleus</location>
    </subcellularLocation>
    <subcellularLocation>
        <location evidence="1">Chromosome</location>
    </subcellularLocation>
</comment>
<comment type="similarity">
    <text evidence="3">Belongs to the histone H3 family.</text>
</comment>
<proteinExistence type="inferred from homology"/>
<accession>P69124</accession>
<accession>P17705</accession>
<dbReference type="EMBL" id="X17143">
    <property type="protein sequence ID" value="CAA35020.1"/>
    <property type="molecule type" value="Genomic_DNA"/>
</dbReference>
<dbReference type="GO" id="GO:0000786">
    <property type="term" value="C:nucleosome"/>
    <property type="evidence" value="ECO:0007669"/>
    <property type="project" value="UniProtKB-KW"/>
</dbReference>
<dbReference type="GO" id="GO:0005634">
    <property type="term" value="C:nucleus"/>
    <property type="evidence" value="ECO:0007669"/>
    <property type="project" value="UniProtKB-SubCell"/>
</dbReference>
<dbReference type="GO" id="GO:0003677">
    <property type="term" value="F:DNA binding"/>
    <property type="evidence" value="ECO:0007669"/>
    <property type="project" value="UniProtKB-KW"/>
</dbReference>
<dbReference type="GO" id="GO:0046982">
    <property type="term" value="F:protein heterodimerization activity"/>
    <property type="evidence" value="ECO:0007669"/>
    <property type="project" value="InterPro"/>
</dbReference>
<dbReference type="GO" id="GO:0030527">
    <property type="term" value="F:structural constituent of chromatin"/>
    <property type="evidence" value="ECO:0007669"/>
    <property type="project" value="InterPro"/>
</dbReference>
<dbReference type="Gene3D" id="1.10.20.10">
    <property type="entry name" value="Histone, subunit A"/>
    <property type="match status" value="1"/>
</dbReference>
<dbReference type="InterPro" id="IPR009072">
    <property type="entry name" value="Histone-fold"/>
</dbReference>
<dbReference type="InterPro" id="IPR000164">
    <property type="entry name" value="Histone_H3/CENP-A"/>
</dbReference>
<dbReference type="PANTHER" id="PTHR11426">
    <property type="entry name" value="HISTONE H3"/>
    <property type="match status" value="1"/>
</dbReference>
<dbReference type="PRINTS" id="PR00622">
    <property type="entry name" value="HISTONEH3"/>
</dbReference>
<dbReference type="SUPFAM" id="SSF47113">
    <property type="entry name" value="Histone-fold"/>
    <property type="match status" value="1"/>
</dbReference>
<dbReference type="PROSITE" id="PS00322">
    <property type="entry name" value="HISTONE_H3_1"/>
    <property type="match status" value="1"/>
</dbReference>
<reference key="1">
    <citation type="journal article" date="1990" name="Nucleic Acids Res.">
        <title>Characterization of the promoter region of Tetrahymena genes.</title>
        <authorList>
            <person name="Brunk C.F."/>
            <person name="Sadler L.A."/>
        </authorList>
    </citation>
    <scope>NUCLEOTIDE SEQUENCE [GENOMIC DNA]</scope>
</reference>
<reference key="2">
    <citation type="journal article" date="1990" name="J. Mol. Evol.">
        <title>Phylogenetic relationships among Tetrahymena species determined using the polymerase chain reaction.</title>
        <authorList>
            <person name="Brunk C.F."/>
            <person name="Kahn R.W."/>
            <person name="Sadler L.A."/>
        </authorList>
    </citation>
    <scope>NUCLEOTIDE SEQUENCE [GENOMIC DNA]</scope>
</reference>
<evidence type="ECO:0000250" key="1"/>
<evidence type="ECO:0000256" key="2">
    <source>
        <dbReference type="SAM" id="MobiDB-lite"/>
    </source>
</evidence>
<evidence type="ECO:0000305" key="3"/>
<organism>
    <name type="scientific">Tetrahymena pigmentosa</name>
    <dbReference type="NCBI Taxonomy" id="5907"/>
    <lineage>
        <taxon>Eukaryota</taxon>
        <taxon>Sar</taxon>
        <taxon>Alveolata</taxon>
        <taxon>Ciliophora</taxon>
        <taxon>Intramacronucleata</taxon>
        <taxon>Oligohymenophorea</taxon>
        <taxon>Hymenostomatida</taxon>
        <taxon>Tetrahymenina</taxon>
        <taxon>Tetrahymenidae</taxon>
        <taxon>Tetrahymena</taxon>
    </lineage>
</organism>